<proteinExistence type="evidence at transcript level"/>
<keyword id="KW-0175">Coiled coil</keyword>
<keyword id="KW-0217">Developmental protein</keyword>
<keyword id="KW-0221">Differentiation</keyword>
<keyword id="KW-0334">Gonadal differentiation</keyword>
<keyword id="KW-0539">Nucleus</keyword>
<keyword id="KW-1185">Reference proteome</keyword>
<keyword id="KW-0677">Repeat</keyword>
<keyword id="KW-0690">Ribosome biogenesis</keyword>
<keyword id="KW-0698">rRNA processing</keyword>
<keyword id="KW-0853">WD repeat</keyword>
<sequence length="529" mass="58544">MAYLGVDTSRIAGTQPLEMLLVSSGSPDPHSTIIIDPRTGVSSWSYKGSELQGASTGLVEPLGHDGEHVVITTKERPLVHVLAVHPKDRFHQKCVLPGPVSAIVSDNSGHFVFMSIKRQLYCWLLSTGELLSVIDAHYQNITKIVISDDDSMIFTASKDGAVHGYLVTDLVSADRDHTVAPFRKWASHTLSISDLKITNGSNPRVLSAGADHIACLHSISMDSVILKASSDRPLTACAIDPAETRIFIGTEVGNIAQINLFQLAPEERDLLVQAGDEHNTKFRVLNGHSDEISRLAINTDGTLLASGDASGKYCIWEISSHQCLKVSTMRSVINTLRFIPFWKTISGGEHVAKFRPVWDLKREPTKCDRFAIEVSTEFNSDQKHWNDVIEETIDQLLLESGSKSSAQLQWDAEGPARNEAAKAEKAAENTIKNIITLGDDEDDAPEVGNQRRKSGKKNKKNRKNQKKNDFEAAVIEKKQVEPIVIDDEEEVNSSLQKKFDALKAENEKLKEINKQMYEFVAKEIVDSEK</sequence>
<comment type="function">
    <text evidence="2 5 6">Component of the PELP1 complex involved in the nucleolar steps of 28S rRNA maturation and the subsequent nucleoplasmic transit of the pre-60S ribosomal subunit (By similarity). Required for processing ITS2 sequences from rRNA intermediates during 26S rRNA maturation (PubMed:16876152). Required in the soma to promote normal proliferation and prevent germline tumor formation (PubMed:14973273).</text>
</comment>
<comment type="subunit">
    <text evidence="2">Component of the PELP1 complex, composed of at least PELP1, TEX10 and WDR18. The complex interacts with pre-60S ribosome particles.</text>
</comment>
<comment type="subcellular location">
    <subcellularLocation>
        <location evidence="2">Nucleus</location>
        <location evidence="2">Nucleolus</location>
    </subcellularLocation>
    <subcellularLocation>
        <location evidence="1">Nucleus</location>
        <location evidence="1">Nucleoplasm</location>
    </subcellularLocation>
</comment>
<comment type="disruption phenotype">
    <text evidence="5">Worms exhibit defects in rRNA processing which disrupt hermaphrodite gonadogenesis and germline proliferation and which are associated with a reduction in sheath cell number.</text>
</comment>
<comment type="similarity">
    <text evidence="7">Belongs to the WD repeat IPI3/WDR18 family.</text>
</comment>
<name>PRO1_CAEEL</name>
<dbReference type="EMBL" id="Z50795">
    <property type="protein sequence ID" value="CAA90666.1"/>
    <property type="molecule type" value="Genomic_DNA"/>
</dbReference>
<dbReference type="PIR" id="T24231">
    <property type="entry name" value="T24231"/>
</dbReference>
<dbReference type="RefSeq" id="NP_496271.1">
    <property type="nucleotide sequence ID" value="NM_063870.7"/>
</dbReference>
<dbReference type="SMR" id="Q22006"/>
<dbReference type="BioGRID" id="39938">
    <property type="interactions" value="2"/>
</dbReference>
<dbReference type="FunCoup" id="Q22006">
    <property type="interactions" value="2295"/>
</dbReference>
<dbReference type="IntAct" id="Q22006">
    <property type="interactions" value="1"/>
</dbReference>
<dbReference type="STRING" id="6239.R166.4.1"/>
<dbReference type="PaxDb" id="6239-R166.4"/>
<dbReference type="PeptideAtlas" id="Q22006"/>
<dbReference type="EnsemblMetazoa" id="R166.4.1">
    <property type="protein sequence ID" value="R166.4.1"/>
    <property type="gene ID" value="WBGene00004185"/>
</dbReference>
<dbReference type="GeneID" id="174622"/>
<dbReference type="KEGG" id="cel:CELE_R166.4"/>
<dbReference type="UCSC" id="R166.4">
    <property type="organism name" value="c. elegans"/>
</dbReference>
<dbReference type="AGR" id="WB:WBGene00004185"/>
<dbReference type="CTD" id="174622"/>
<dbReference type="WormBase" id="R166.4">
    <property type="protein sequence ID" value="CE03583"/>
    <property type="gene ID" value="WBGene00004185"/>
    <property type="gene designation" value="pro-1"/>
</dbReference>
<dbReference type="eggNOG" id="KOG0646">
    <property type="taxonomic scope" value="Eukaryota"/>
</dbReference>
<dbReference type="GeneTree" id="ENSGT00390000000289"/>
<dbReference type="HOGENOM" id="CLU_038304_0_0_1"/>
<dbReference type="InParanoid" id="Q22006"/>
<dbReference type="OMA" id="KYCIWEI"/>
<dbReference type="OrthoDB" id="756370at2759"/>
<dbReference type="PhylomeDB" id="Q22006"/>
<dbReference type="Reactome" id="R-CEL-6791226">
    <property type="pathway name" value="Major pathway of rRNA processing in the nucleolus and cytosol"/>
</dbReference>
<dbReference type="PRO" id="PR:Q22006"/>
<dbReference type="Proteomes" id="UP000001940">
    <property type="component" value="Chromosome II"/>
</dbReference>
<dbReference type="Bgee" id="WBGene00004185">
    <property type="expression patterns" value="Expressed in germ line (C elegans) and 4 other cell types or tissues"/>
</dbReference>
<dbReference type="GO" id="GO:0005656">
    <property type="term" value="C:nuclear pre-replicative complex"/>
    <property type="evidence" value="ECO:0000318"/>
    <property type="project" value="GO_Central"/>
</dbReference>
<dbReference type="GO" id="GO:0005730">
    <property type="term" value="C:nucleolus"/>
    <property type="evidence" value="ECO:0007669"/>
    <property type="project" value="UniProtKB-SubCell"/>
</dbReference>
<dbReference type="GO" id="GO:0005654">
    <property type="term" value="C:nucleoplasm"/>
    <property type="evidence" value="ECO:0000250"/>
    <property type="project" value="WormBase"/>
</dbReference>
<dbReference type="GO" id="GO:0120330">
    <property type="term" value="C:rixosome complex"/>
    <property type="evidence" value="ECO:0000318"/>
    <property type="project" value="GO_Central"/>
</dbReference>
<dbReference type="GO" id="GO:0006261">
    <property type="term" value="P:DNA-templated DNA replication"/>
    <property type="evidence" value="ECO:0000318"/>
    <property type="project" value="GO_Central"/>
</dbReference>
<dbReference type="GO" id="GO:0007281">
    <property type="term" value="P:germ cell development"/>
    <property type="evidence" value="ECO:0000315"/>
    <property type="project" value="WormBase"/>
</dbReference>
<dbReference type="GO" id="GO:0008406">
    <property type="term" value="P:gonad development"/>
    <property type="evidence" value="ECO:0000315"/>
    <property type="project" value="WormBase"/>
</dbReference>
<dbReference type="GO" id="GO:0007506">
    <property type="term" value="P:gonadal mesoderm development"/>
    <property type="evidence" value="ECO:0007669"/>
    <property type="project" value="UniProtKB-KW"/>
</dbReference>
<dbReference type="GO" id="GO:0006364">
    <property type="term" value="P:rRNA processing"/>
    <property type="evidence" value="ECO:0000315"/>
    <property type="project" value="WormBase"/>
</dbReference>
<dbReference type="FunFam" id="2.130.10.10:FF:002335">
    <property type="entry name" value="Pre-rRNA-processing protein pro-1"/>
    <property type="match status" value="1"/>
</dbReference>
<dbReference type="FunFam" id="2.130.10.10:FF:002913">
    <property type="entry name" value="Pre-rRNA-processing protein pro-1"/>
    <property type="match status" value="1"/>
</dbReference>
<dbReference type="Gene3D" id="2.130.10.10">
    <property type="entry name" value="YVTN repeat-like/Quinoprotein amine dehydrogenase"/>
    <property type="match status" value="2"/>
</dbReference>
<dbReference type="InterPro" id="IPR015943">
    <property type="entry name" value="WD40/YVTN_repeat-like_dom_sf"/>
</dbReference>
<dbReference type="InterPro" id="IPR036322">
    <property type="entry name" value="WD40_repeat_dom_sf"/>
</dbReference>
<dbReference type="InterPro" id="IPR001680">
    <property type="entry name" value="WD40_rpt"/>
</dbReference>
<dbReference type="InterPro" id="IPR045227">
    <property type="entry name" value="WDR18/Ipi3/RID3"/>
</dbReference>
<dbReference type="PANTHER" id="PTHR18763:SF0">
    <property type="entry name" value="WD REPEAT-CONTAINING PROTEIN 18"/>
    <property type="match status" value="1"/>
</dbReference>
<dbReference type="PANTHER" id="PTHR18763">
    <property type="entry name" value="WD-REPEAT PROTEIN 18"/>
    <property type="match status" value="1"/>
</dbReference>
<dbReference type="Pfam" id="PF00400">
    <property type="entry name" value="WD40"/>
    <property type="match status" value="2"/>
</dbReference>
<dbReference type="SMART" id="SM00320">
    <property type="entry name" value="WD40"/>
    <property type="match status" value="3"/>
</dbReference>
<dbReference type="SUPFAM" id="SSF50978">
    <property type="entry name" value="WD40 repeat-like"/>
    <property type="match status" value="1"/>
</dbReference>
<dbReference type="PROSITE" id="PS50082">
    <property type="entry name" value="WD_REPEATS_2"/>
    <property type="match status" value="1"/>
</dbReference>
<dbReference type="PROSITE" id="PS50294">
    <property type="entry name" value="WD_REPEATS_REGION"/>
    <property type="match status" value="1"/>
</dbReference>
<evidence type="ECO:0000250" key="1">
    <source>
        <dbReference type="UniProtKB" id="Q4VBE8"/>
    </source>
</evidence>
<evidence type="ECO:0000250" key="2">
    <source>
        <dbReference type="UniProtKB" id="Q9BV38"/>
    </source>
</evidence>
<evidence type="ECO:0000255" key="3"/>
<evidence type="ECO:0000256" key="4">
    <source>
        <dbReference type="SAM" id="MobiDB-lite"/>
    </source>
</evidence>
<evidence type="ECO:0000269" key="5">
    <source>
    </source>
</evidence>
<evidence type="ECO:0000269" key="6">
    <source>
    </source>
</evidence>
<evidence type="ECO:0000305" key="7"/>
<evidence type="ECO:0000312" key="8">
    <source>
        <dbReference type="EMBL" id="CAA90666.1"/>
    </source>
</evidence>
<gene>
    <name evidence="8" type="primary">pro-1</name>
    <name type="ORF">R166.4</name>
</gene>
<protein>
    <recommendedName>
        <fullName>Pre-rRNA-processing protein pro-1</fullName>
    </recommendedName>
    <alternativeName>
        <fullName>Proximal proliferation in germline protein 1</fullName>
    </alternativeName>
</protein>
<organism>
    <name type="scientific">Caenorhabditis elegans</name>
    <dbReference type="NCBI Taxonomy" id="6239"/>
    <lineage>
        <taxon>Eukaryota</taxon>
        <taxon>Metazoa</taxon>
        <taxon>Ecdysozoa</taxon>
        <taxon>Nematoda</taxon>
        <taxon>Chromadorea</taxon>
        <taxon>Rhabditida</taxon>
        <taxon>Rhabditina</taxon>
        <taxon>Rhabditomorpha</taxon>
        <taxon>Rhabditoidea</taxon>
        <taxon>Rhabditidae</taxon>
        <taxon>Peloderinae</taxon>
        <taxon>Caenorhabditis</taxon>
    </lineage>
</organism>
<reference evidence="7" key="1">
    <citation type="journal article" date="2004" name="Development">
        <title>C. elegans pro-1 activity is required for soma/germline interactions that influence proliferation and differentiation in the germ line.</title>
        <authorList>
            <person name="Killian D.J."/>
            <person name="Hubbard E.J.A."/>
        </authorList>
    </citation>
    <scope>NUCLEOTIDE SEQUENCE [MRNA]</scope>
    <scope>FUNCTION</scope>
    <scope>DISRUPTION PHENOTYPE</scope>
</reference>
<reference evidence="8" key="2">
    <citation type="journal article" date="1998" name="Science">
        <title>Genome sequence of the nematode C. elegans: a platform for investigating biology.</title>
        <authorList>
            <consortium name="The C. elegans sequencing consortium"/>
        </authorList>
    </citation>
    <scope>NUCLEOTIDE SEQUENCE [LARGE SCALE GENOMIC DNA]</scope>
    <source>
        <strain>Bristol N2</strain>
    </source>
</reference>
<reference evidence="7" key="3">
    <citation type="journal article" date="2006" name="Dev. Biol.">
        <title>Alterations in ribosome biogenesis cause specific defects in C. elegans hermaphrodite gonadogenesis.</title>
        <authorList>
            <person name="Voutev R."/>
            <person name="Killian D.J."/>
            <person name="Ahn J.H."/>
            <person name="Hubbard E.J.A."/>
        </authorList>
    </citation>
    <scope>FUNCTION</scope>
</reference>
<accession>Q22006</accession>
<feature type="chain" id="PRO_0000315877" description="Pre-rRNA-processing protein pro-1">
    <location>
        <begin position="1"/>
        <end position="529"/>
    </location>
</feature>
<feature type="repeat" description="WD 1" evidence="3">
    <location>
        <begin position="136"/>
        <end position="175"/>
    </location>
</feature>
<feature type="repeat" description="WD 2" evidence="3">
    <location>
        <begin position="287"/>
        <end position="326"/>
    </location>
</feature>
<feature type="region of interest" description="Disordered" evidence="4">
    <location>
        <begin position="436"/>
        <end position="470"/>
    </location>
</feature>
<feature type="coiled-coil region" evidence="3">
    <location>
        <begin position="416"/>
        <end position="518"/>
    </location>
</feature>
<feature type="compositionally biased region" description="Basic residues" evidence="4">
    <location>
        <begin position="450"/>
        <end position="465"/>
    </location>
</feature>